<name>FMT_LISMO</name>
<proteinExistence type="inferred from homology"/>
<gene>
    <name evidence="1" type="primary">fmt</name>
    <name type="ordered locus">lmo1823</name>
</gene>
<reference key="1">
    <citation type="journal article" date="2001" name="Science">
        <title>Comparative genomics of Listeria species.</title>
        <authorList>
            <person name="Glaser P."/>
            <person name="Frangeul L."/>
            <person name="Buchrieser C."/>
            <person name="Rusniok C."/>
            <person name="Amend A."/>
            <person name="Baquero F."/>
            <person name="Berche P."/>
            <person name="Bloecker H."/>
            <person name="Brandt P."/>
            <person name="Chakraborty T."/>
            <person name="Charbit A."/>
            <person name="Chetouani F."/>
            <person name="Couve E."/>
            <person name="de Daruvar A."/>
            <person name="Dehoux P."/>
            <person name="Domann E."/>
            <person name="Dominguez-Bernal G."/>
            <person name="Duchaud E."/>
            <person name="Durant L."/>
            <person name="Dussurget O."/>
            <person name="Entian K.-D."/>
            <person name="Fsihi H."/>
            <person name="Garcia-del Portillo F."/>
            <person name="Garrido P."/>
            <person name="Gautier L."/>
            <person name="Goebel W."/>
            <person name="Gomez-Lopez N."/>
            <person name="Hain T."/>
            <person name="Hauf J."/>
            <person name="Jackson D."/>
            <person name="Jones L.-M."/>
            <person name="Kaerst U."/>
            <person name="Kreft J."/>
            <person name="Kuhn M."/>
            <person name="Kunst F."/>
            <person name="Kurapkat G."/>
            <person name="Madueno E."/>
            <person name="Maitournam A."/>
            <person name="Mata Vicente J."/>
            <person name="Ng E."/>
            <person name="Nedjari H."/>
            <person name="Nordsiek G."/>
            <person name="Novella S."/>
            <person name="de Pablos B."/>
            <person name="Perez-Diaz J.-C."/>
            <person name="Purcell R."/>
            <person name="Remmel B."/>
            <person name="Rose M."/>
            <person name="Schlueter T."/>
            <person name="Simoes N."/>
            <person name="Tierrez A."/>
            <person name="Vazquez-Boland J.-A."/>
            <person name="Voss H."/>
            <person name="Wehland J."/>
            <person name="Cossart P."/>
        </authorList>
    </citation>
    <scope>NUCLEOTIDE SEQUENCE [LARGE SCALE GENOMIC DNA]</scope>
    <source>
        <strain>ATCC BAA-679 / EGD-e</strain>
    </source>
</reference>
<accession>Q8Y676</accession>
<protein>
    <recommendedName>
        <fullName evidence="1">Methionyl-tRNA formyltransferase</fullName>
        <ecNumber evidence="1">2.1.2.9</ecNumber>
    </recommendedName>
</protein>
<organism>
    <name type="scientific">Listeria monocytogenes serovar 1/2a (strain ATCC BAA-679 / EGD-e)</name>
    <dbReference type="NCBI Taxonomy" id="169963"/>
    <lineage>
        <taxon>Bacteria</taxon>
        <taxon>Bacillati</taxon>
        <taxon>Bacillota</taxon>
        <taxon>Bacilli</taxon>
        <taxon>Bacillales</taxon>
        <taxon>Listeriaceae</taxon>
        <taxon>Listeria</taxon>
    </lineage>
</organism>
<keyword id="KW-0648">Protein biosynthesis</keyword>
<keyword id="KW-1185">Reference proteome</keyword>
<keyword id="KW-0808">Transferase</keyword>
<evidence type="ECO:0000255" key="1">
    <source>
        <dbReference type="HAMAP-Rule" id="MF_00182"/>
    </source>
</evidence>
<comment type="function">
    <text evidence="1">Attaches a formyl group to the free amino group of methionyl-tRNA(fMet). The formyl group appears to play a dual role in the initiator identity of N-formylmethionyl-tRNA by promoting its recognition by IF2 and preventing the misappropriation of this tRNA by the elongation apparatus.</text>
</comment>
<comment type="catalytic activity">
    <reaction evidence="1">
        <text>L-methionyl-tRNA(fMet) + (6R)-10-formyltetrahydrofolate = N-formyl-L-methionyl-tRNA(fMet) + (6S)-5,6,7,8-tetrahydrofolate + H(+)</text>
        <dbReference type="Rhea" id="RHEA:24380"/>
        <dbReference type="Rhea" id="RHEA-COMP:9952"/>
        <dbReference type="Rhea" id="RHEA-COMP:9953"/>
        <dbReference type="ChEBI" id="CHEBI:15378"/>
        <dbReference type="ChEBI" id="CHEBI:57453"/>
        <dbReference type="ChEBI" id="CHEBI:78530"/>
        <dbReference type="ChEBI" id="CHEBI:78844"/>
        <dbReference type="ChEBI" id="CHEBI:195366"/>
        <dbReference type="EC" id="2.1.2.9"/>
    </reaction>
</comment>
<comment type="similarity">
    <text evidence="1">Belongs to the Fmt family.</text>
</comment>
<sequence>MTKIIFMGTPEFSVPVLTQLASTYDVVAVVTQPDRPVGRKRVLTPPPVKKAALELAIPVYQPEKLRTSSELEELIALEADLLVTAAYGQILPNSLLESPKHGAINVHASLLPEYRGGAPVHYALLDGKTETGVTIMYMVEKLDAGDMISQRKIPITDEDNTGTMFDKLSILGAELLMDTLPDFLAGKITATPQDPEKVTFARNISREQEKIDWTKPGRTIFNQIRGLSPWPVAYTTLEEKPFKIWEATYEDTKEGGEPGAILADKTTLKIVAGDGTLIVPTVIQPAGKPKMDVHSFMTGAGRNLSKTTRFGE</sequence>
<feature type="chain" id="PRO_0000082989" description="Methionyl-tRNA formyltransferase">
    <location>
        <begin position="1"/>
        <end position="312"/>
    </location>
</feature>
<feature type="binding site" evidence="1">
    <location>
        <begin position="109"/>
        <end position="112"/>
    </location>
    <ligand>
        <name>(6S)-5,6,7,8-tetrahydrofolate</name>
        <dbReference type="ChEBI" id="CHEBI:57453"/>
    </ligand>
</feature>
<dbReference type="EC" id="2.1.2.9" evidence="1"/>
<dbReference type="EMBL" id="AL591981">
    <property type="protein sequence ID" value="CAC99901.1"/>
    <property type="molecule type" value="Genomic_DNA"/>
</dbReference>
<dbReference type="PIR" id="AG1302">
    <property type="entry name" value="AG1302"/>
</dbReference>
<dbReference type="RefSeq" id="NP_465348.1">
    <property type="nucleotide sequence ID" value="NC_003210.1"/>
</dbReference>
<dbReference type="RefSeq" id="WP_009930505.1">
    <property type="nucleotide sequence ID" value="NZ_CP149495.1"/>
</dbReference>
<dbReference type="SMR" id="Q8Y676"/>
<dbReference type="STRING" id="169963.gene:17594508"/>
<dbReference type="PaxDb" id="169963-lmo1823"/>
<dbReference type="EnsemblBacteria" id="CAC99901">
    <property type="protein sequence ID" value="CAC99901"/>
    <property type="gene ID" value="CAC99901"/>
</dbReference>
<dbReference type="GeneID" id="985899"/>
<dbReference type="KEGG" id="lmo:lmo1823"/>
<dbReference type="PATRIC" id="fig|169963.11.peg.1868"/>
<dbReference type="eggNOG" id="COG0223">
    <property type="taxonomic scope" value="Bacteria"/>
</dbReference>
<dbReference type="HOGENOM" id="CLU_033347_1_1_9"/>
<dbReference type="OrthoDB" id="9802815at2"/>
<dbReference type="PhylomeDB" id="Q8Y676"/>
<dbReference type="BioCyc" id="LMON169963:LMO1823-MONOMER"/>
<dbReference type="Proteomes" id="UP000000817">
    <property type="component" value="Chromosome"/>
</dbReference>
<dbReference type="GO" id="GO:0005829">
    <property type="term" value="C:cytosol"/>
    <property type="evidence" value="ECO:0000318"/>
    <property type="project" value="GO_Central"/>
</dbReference>
<dbReference type="GO" id="GO:0004479">
    <property type="term" value="F:methionyl-tRNA formyltransferase activity"/>
    <property type="evidence" value="ECO:0000318"/>
    <property type="project" value="GO_Central"/>
</dbReference>
<dbReference type="GO" id="GO:0071951">
    <property type="term" value="P:conversion of methionyl-tRNA to N-formyl-methionyl-tRNA"/>
    <property type="evidence" value="ECO:0000318"/>
    <property type="project" value="GO_Central"/>
</dbReference>
<dbReference type="CDD" id="cd08646">
    <property type="entry name" value="FMT_core_Met-tRNA-FMT_N"/>
    <property type="match status" value="1"/>
</dbReference>
<dbReference type="CDD" id="cd08704">
    <property type="entry name" value="Met_tRNA_FMT_C"/>
    <property type="match status" value="1"/>
</dbReference>
<dbReference type="FunFam" id="3.40.50.12230:FF:000001">
    <property type="entry name" value="Methionyl-tRNA formyltransferase"/>
    <property type="match status" value="1"/>
</dbReference>
<dbReference type="FunFam" id="3.40.50.170:FF:000004">
    <property type="entry name" value="Methionyl-tRNA formyltransferase"/>
    <property type="match status" value="1"/>
</dbReference>
<dbReference type="Gene3D" id="3.40.50.12230">
    <property type="match status" value="1"/>
</dbReference>
<dbReference type="HAMAP" id="MF_00182">
    <property type="entry name" value="Formyl_trans"/>
    <property type="match status" value="1"/>
</dbReference>
<dbReference type="InterPro" id="IPR005794">
    <property type="entry name" value="Fmt"/>
</dbReference>
<dbReference type="InterPro" id="IPR005793">
    <property type="entry name" value="Formyl_trans_C"/>
</dbReference>
<dbReference type="InterPro" id="IPR002376">
    <property type="entry name" value="Formyl_transf_N"/>
</dbReference>
<dbReference type="InterPro" id="IPR036477">
    <property type="entry name" value="Formyl_transf_N_sf"/>
</dbReference>
<dbReference type="InterPro" id="IPR011034">
    <property type="entry name" value="Formyl_transferase-like_C_sf"/>
</dbReference>
<dbReference type="InterPro" id="IPR001555">
    <property type="entry name" value="GART_AS"/>
</dbReference>
<dbReference type="InterPro" id="IPR044135">
    <property type="entry name" value="Met-tRNA-FMT_C"/>
</dbReference>
<dbReference type="InterPro" id="IPR041711">
    <property type="entry name" value="Met-tRNA-FMT_N"/>
</dbReference>
<dbReference type="NCBIfam" id="TIGR00460">
    <property type="entry name" value="fmt"/>
    <property type="match status" value="1"/>
</dbReference>
<dbReference type="PANTHER" id="PTHR11138">
    <property type="entry name" value="METHIONYL-TRNA FORMYLTRANSFERASE"/>
    <property type="match status" value="1"/>
</dbReference>
<dbReference type="PANTHER" id="PTHR11138:SF5">
    <property type="entry name" value="METHIONYL-TRNA FORMYLTRANSFERASE, MITOCHONDRIAL"/>
    <property type="match status" value="1"/>
</dbReference>
<dbReference type="Pfam" id="PF02911">
    <property type="entry name" value="Formyl_trans_C"/>
    <property type="match status" value="1"/>
</dbReference>
<dbReference type="Pfam" id="PF00551">
    <property type="entry name" value="Formyl_trans_N"/>
    <property type="match status" value="1"/>
</dbReference>
<dbReference type="SUPFAM" id="SSF50486">
    <property type="entry name" value="FMT C-terminal domain-like"/>
    <property type="match status" value="1"/>
</dbReference>
<dbReference type="SUPFAM" id="SSF53328">
    <property type="entry name" value="Formyltransferase"/>
    <property type="match status" value="1"/>
</dbReference>
<dbReference type="PROSITE" id="PS00373">
    <property type="entry name" value="GART"/>
    <property type="match status" value="1"/>
</dbReference>